<proteinExistence type="inferred from homology"/>
<feature type="chain" id="PRO_1000166499" description="Small ribosomal subunit protein uS17">
    <location>
        <begin position="1"/>
        <end position="86"/>
    </location>
</feature>
<organism>
    <name type="scientific">Streptococcus pneumoniae (strain ATCC 700669 / Spain 23F-1)</name>
    <dbReference type="NCBI Taxonomy" id="561276"/>
    <lineage>
        <taxon>Bacteria</taxon>
        <taxon>Bacillati</taxon>
        <taxon>Bacillota</taxon>
        <taxon>Bacilli</taxon>
        <taxon>Lactobacillales</taxon>
        <taxon>Streptococcaceae</taxon>
        <taxon>Streptococcus</taxon>
    </lineage>
</organism>
<sequence>MERNNRKVLVGRVVSDKMDKTITVVVETKRNHPVYGKRINYSKKYKAHDENNVAKEGDIVRIMETRPLSATKRFRLVEVVEEAVII</sequence>
<accession>B8ZKG6</accession>
<protein>
    <recommendedName>
        <fullName evidence="1">Small ribosomal subunit protein uS17</fullName>
    </recommendedName>
    <alternativeName>
        <fullName evidence="2">30S ribosomal protein S17</fullName>
    </alternativeName>
</protein>
<gene>
    <name evidence="1" type="primary">rpsQ</name>
    <name type="ordered locus">SPN23F02080</name>
</gene>
<dbReference type="EMBL" id="FM211187">
    <property type="protein sequence ID" value="CAR68068.1"/>
    <property type="molecule type" value="Genomic_DNA"/>
</dbReference>
<dbReference type="RefSeq" id="WP_000440801.1">
    <property type="nucleotide sequence ID" value="NC_011900.1"/>
</dbReference>
<dbReference type="SMR" id="B8ZKG6"/>
<dbReference type="GeneID" id="93920913"/>
<dbReference type="KEGG" id="sne:SPN23F02080"/>
<dbReference type="HOGENOM" id="CLU_073626_1_0_9"/>
<dbReference type="GO" id="GO:0022627">
    <property type="term" value="C:cytosolic small ribosomal subunit"/>
    <property type="evidence" value="ECO:0007669"/>
    <property type="project" value="TreeGrafter"/>
</dbReference>
<dbReference type="GO" id="GO:0019843">
    <property type="term" value="F:rRNA binding"/>
    <property type="evidence" value="ECO:0007669"/>
    <property type="project" value="UniProtKB-UniRule"/>
</dbReference>
<dbReference type="GO" id="GO:0003735">
    <property type="term" value="F:structural constituent of ribosome"/>
    <property type="evidence" value="ECO:0007669"/>
    <property type="project" value="InterPro"/>
</dbReference>
<dbReference type="GO" id="GO:0006412">
    <property type="term" value="P:translation"/>
    <property type="evidence" value="ECO:0007669"/>
    <property type="project" value="UniProtKB-UniRule"/>
</dbReference>
<dbReference type="CDD" id="cd00364">
    <property type="entry name" value="Ribosomal_uS17"/>
    <property type="match status" value="1"/>
</dbReference>
<dbReference type="FunFam" id="2.40.50.140:FF:000026">
    <property type="entry name" value="30S ribosomal protein S17"/>
    <property type="match status" value="1"/>
</dbReference>
<dbReference type="Gene3D" id="2.40.50.140">
    <property type="entry name" value="Nucleic acid-binding proteins"/>
    <property type="match status" value="1"/>
</dbReference>
<dbReference type="HAMAP" id="MF_01345_B">
    <property type="entry name" value="Ribosomal_uS17_B"/>
    <property type="match status" value="1"/>
</dbReference>
<dbReference type="InterPro" id="IPR012340">
    <property type="entry name" value="NA-bd_OB-fold"/>
</dbReference>
<dbReference type="InterPro" id="IPR000266">
    <property type="entry name" value="Ribosomal_uS17"/>
</dbReference>
<dbReference type="InterPro" id="IPR019984">
    <property type="entry name" value="Ribosomal_uS17_bact/chlr"/>
</dbReference>
<dbReference type="InterPro" id="IPR019979">
    <property type="entry name" value="Ribosomal_uS17_CS"/>
</dbReference>
<dbReference type="NCBIfam" id="NF004123">
    <property type="entry name" value="PRK05610.1"/>
    <property type="match status" value="1"/>
</dbReference>
<dbReference type="NCBIfam" id="TIGR03635">
    <property type="entry name" value="uS17_bact"/>
    <property type="match status" value="1"/>
</dbReference>
<dbReference type="PANTHER" id="PTHR10744">
    <property type="entry name" value="40S RIBOSOMAL PROTEIN S11 FAMILY MEMBER"/>
    <property type="match status" value="1"/>
</dbReference>
<dbReference type="PANTHER" id="PTHR10744:SF1">
    <property type="entry name" value="SMALL RIBOSOMAL SUBUNIT PROTEIN US17M"/>
    <property type="match status" value="1"/>
</dbReference>
<dbReference type="Pfam" id="PF00366">
    <property type="entry name" value="Ribosomal_S17"/>
    <property type="match status" value="1"/>
</dbReference>
<dbReference type="PRINTS" id="PR00973">
    <property type="entry name" value="RIBOSOMALS17"/>
</dbReference>
<dbReference type="SUPFAM" id="SSF50249">
    <property type="entry name" value="Nucleic acid-binding proteins"/>
    <property type="match status" value="1"/>
</dbReference>
<dbReference type="PROSITE" id="PS00056">
    <property type="entry name" value="RIBOSOMAL_S17"/>
    <property type="match status" value="1"/>
</dbReference>
<name>RS17_STRPJ</name>
<evidence type="ECO:0000255" key="1">
    <source>
        <dbReference type="HAMAP-Rule" id="MF_01345"/>
    </source>
</evidence>
<evidence type="ECO:0000305" key="2"/>
<comment type="function">
    <text evidence="1">One of the primary rRNA binding proteins, it binds specifically to the 5'-end of 16S ribosomal RNA.</text>
</comment>
<comment type="subunit">
    <text evidence="1">Part of the 30S ribosomal subunit.</text>
</comment>
<comment type="similarity">
    <text evidence="1">Belongs to the universal ribosomal protein uS17 family.</text>
</comment>
<keyword id="KW-0687">Ribonucleoprotein</keyword>
<keyword id="KW-0689">Ribosomal protein</keyword>
<keyword id="KW-0694">RNA-binding</keyword>
<keyword id="KW-0699">rRNA-binding</keyword>
<reference key="1">
    <citation type="journal article" date="2009" name="J. Bacteriol.">
        <title>Role of conjugative elements in the evolution of the multidrug-resistant pandemic clone Streptococcus pneumoniae Spain23F ST81.</title>
        <authorList>
            <person name="Croucher N.J."/>
            <person name="Walker D."/>
            <person name="Romero P."/>
            <person name="Lennard N."/>
            <person name="Paterson G.K."/>
            <person name="Bason N.C."/>
            <person name="Mitchell A.M."/>
            <person name="Quail M.A."/>
            <person name="Andrew P.W."/>
            <person name="Parkhill J."/>
            <person name="Bentley S.D."/>
            <person name="Mitchell T.J."/>
        </authorList>
    </citation>
    <scope>NUCLEOTIDE SEQUENCE [LARGE SCALE GENOMIC DNA]</scope>
    <source>
        <strain>ATCC 700669 / Spain 23F-1</strain>
    </source>
</reference>